<sequence>MNFLAHLHLATLADSSLLGNLLADFVRGNPQGEYSPEIVAGIMMHRRVDVMTDTLPLVKEARGYFSADYRRVAPITLDVLWDHFLSRNWDKLMPDCSLPDFIEHAQCQILPHLPLTPARFQNLNAYLWPERWLERYAELPFIADVLQGMANRRPKLAALAGSFHDIEQHYQPLEQLFWAFYPAMMSQAQDKQI</sequence>
<keyword id="KW-0275">Fatty acid biosynthesis</keyword>
<keyword id="KW-0276">Fatty acid metabolism</keyword>
<keyword id="KW-0378">Hydrolase</keyword>
<keyword id="KW-0444">Lipid biosynthesis</keyword>
<keyword id="KW-0443">Lipid metabolism</keyword>
<gene>
    <name evidence="1" type="primary">acpH</name>
    <name type="ordered locus">YE3173</name>
</gene>
<comment type="function">
    <text evidence="1">Converts holo-ACP to apo-ACP by hydrolytic cleavage of the phosphopantetheine prosthetic group from ACP.</text>
</comment>
<comment type="catalytic activity">
    <reaction evidence="1">
        <text>holo-[ACP] + H2O = apo-[ACP] + (R)-4'-phosphopantetheine + H(+)</text>
        <dbReference type="Rhea" id="RHEA:20537"/>
        <dbReference type="Rhea" id="RHEA-COMP:9685"/>
        <dbReference type="Rhea" id="RHEA-COMP:9690"/>
        <dbReference type="ChEBI" id="CHEBI:15377"/>
        <dbReference type="ChEBI" id="CHEBI:15378"/>
        <dbReference type="ChEBI" id="CHEBI:29999"/>
        <dbReference type="ChEBI" id="CHEBI:61723"/>
        <dbReference type="ChEBI" id="CHEBI:64479"/>
        <dbReference type="EC" id="3.1.4.14"/>
    </reaction>
</comment>
<comment type="similarity">
    <text evidence="1">Belongs to the AcpH family.</text>
</comment>
<name>ACPH_YERE8</name>
<proteinExistence type="inferred from homology"/>
<reference key="1">
    <citation type="journal article" date="2006" name="PLoS Genet.">
        <title>The complete genome sequence and comparative genome analysis of the high pathogenicity Yersinia enterocolitica strain 8081.</title>
        <authorList>
            <person name="Thomson N.R."/>
            <person name="Howard S."/>
            <person name="Wren B.W."/>
            <person name="Holden M.T.G."/>
            <person name="Crossman L."/>
            <person name="Challis G.L."/>
            <person name="Churcher C."/>
            <person name="Mungall K."/>
            <person name="Brooks K."/>
            <person name="Chillingworth T."/>
            <person name="Feltwell T."/>
            <person name="Abdellah Z."/>
            <person name="Hauser H."/>
            <person name="Jagels K."/>
            <person name="Maddison M."/>
            <person name="Moule S."/>
            <person name="Sanders M."/>
            <person name="Whitehead S."/>
            <person name="Quail M.A."/>
            <person name="Dougan G."/>
            <person name="Parkhill J."/>
            <person name="Prentice M.B."/>
        </authorList>
    </citation>
    <scope>NUCLEOTIDE SEQUENCE [LARGE SCALE GENOMIC DNA]</scope>
    <source>
        <strain>NCTC 13174 / 8081</strain>
    </source>
</reference>
<protein>
    <recommendedName>
        <fullName evidence="1">Acyl carrier protein phosphodiesterase</fullName>
        <shortName evidence="1">ACP phosphodiesterase</shortName>
        <ecNumber evidence="1">3.1.4.14</ecNumber>
    </recommendedName>
</protein>
<evidence type="ECO:0000255" key="1">
    <source>
        <dbReference type="HAMAP-Rule" id="MF_01950"/>
    </source>
</evidence>
<feature type="chain" id="PRO_1000070628" description="Acyl carrier protein phosphodiesterase">
    <location>
        <begin position="1"/>
        <end position="193"/>
    </location>
</feature>
<organism>
    <name type="scientific">Yersinia enterocolitica serotype O:8 / biotype 1B (strain NCTC 13174 / 8081)</name>
    <dbReference type="NCBI Taxonomy" id="393305"/>
    <lineage>
        <taxon>Bacteria</taxon>
        <taxon>Pseudomonadati</taxon>
        <taxon>Pseudomonadota</taxon>
        <taxon>Gammaproteobacteria</taxon>
        <taxon>Enterobacterales</taxon>
        <taxon>Yersiniaceae</taxon>
        <taxon>Yersinia</taxon>
    </lineage>
</organism>
<accession>A1JNT5</accession>
<dbReference type="EC" id="3.1.4.14" evidence="1"/>
<dbReference type="EMBL" id="AM286415">
    <property type="protein sequence ID" value="CAL13205.1"/>
    <property type="molecule type" value="Genomic_DNA"/>
</dbReference>
<dbReference type="RefSeq" id="WP_005167576.1">
    <property type="nucleotide sequence ID" value="NC_008800.1"/>
</dbReference>
<dbReference type="RefSeq" id="YP_001007351.1">
    <property type="nucleotide sequence ID" value="NC_008800.1"/>
</dbReference>
<dbReference type="KEGG" id="yen:YE3173"/>
<dbReference type="PATRIC" id="fig|393305.7.peg.3373"/>
<dbReference type="eggNOG" id="COG3124">
    <property type="taxonomic scope" value="Bacteria"/>
</dbReference>
<dbReference type="HOGENOM" id="CLU_099370_1_0_6"/>
<dbReference type="OrthoDB" id="8442777at2"/>
<dbReference type="Proteomes" id="UP000000642">
    <property type="component" value="Chromosome"/>
</dbReference>
<dbReference type="GO" id="GO:0008770">
    <property type="term" value="F:[acyl-carrier-protein] phosphodiesterase activity"/>
    <property type="evidence" value="ECO:0007669"/>
    <property type="project" value="UniProtKB-UniRule"/>
</dbReference>
<dbReference type="GO" id="GO:0006633">
    <property type="term" value="P:fatty acid biosynthetic process"/>
    <property type="evidence" value="ECO:0007669"/>
    <property type="project" value="UniProtKB-UniRule"/>
</dbReference>
<dbReference type="HAMAP" id="MF_01950">
    <property type="entry name" value="AcpH"/>
    <property type="match status" value="1"/>
</dbReference>
<dbReference type="InterPro" id="IPR007431">
    <property type="entry name" value="ACP_PD"/>
</dbReference>
<dbReference type="InterPro" id="IPR023491">
    <property type="entry name" value="ACP_phosphodiesterase_gpbac"/>
</dbReference>
<dbReference type="PANTHER" id="PTHR38764">
    <property type="entry name" value="ACYL CARRIER PROTEIN PHOSPHODIESTERASE"/>
    <property type="match status" value="1"/>
</dbReference>
<dbReference type="PANTHER" id="PTHR38764:SF1">
    <property type="entry name" value="ACYL CARRIER PROTEIN PHOSPHODIESTERASE"/>
    <property type="match status" value="1"/>
</dbReference>
<dbReference type="Pfam" id="PF04336">
    <property type="entry name" value="ACP_PD"/>
    <property type="match status" value="1"/>
</dbReference>
<dbReference type="PIRSF" id="PIRSF011489">
    <property type="entry name" value="DUF479"/>
    <property type="match status" value="1"/>
</dbReference>